<proteinExistence type="inferred from homology"/>
<reference key="1">
    <citation type="journal article" date="2004" name="Environ. Microbiol.">
        <title>The genome of Desulfotalea psychrophila, a sulfate-reducing bacterium from permanently cold Arctic sediments.</title>
        <authorList>
            <person name="Rabus R."/>
            <person name="Ruepp A."/>
            <person name="Frickey T."/>
            <person name="Rattei T."/>
            <person name="Fartmann B."/>
            <person name="Stark M."/>
            <person name="Bauer M."/>
            <person name="Zibat A."/>
            <person name="Lombardot T."/>
            <person name="Becker I."/>
            <person name="Amann J."/>
            <person name="Gellner K."/>
            <person name="Teeling H."/>
            <person name="Leuschner W.D."/>
            <person name="Gloeckner F.-O."/>
            <person name="Lupas A.N."/>
            <person name="Amann R."/>
            <person name="Klenk H.-P."/>
        </authorList>
    </citation>
    <scope>NUCLEOTIDE SEQUENCE [LARGE SCALE GENOMIC DNA]</scope>
    <source>
        <strain>DSM 12343 / LSv54</strain>
    </source>
</reference>
<accession>Q6ARP3</accession>
<organism>
    <name type="scientific">Desulfotalea psychrophila (strain LSv54 / DSM 12343)</name>
    <dbReference type="NCBI Taxonomy" id="177439"/>
    <lineage>
        <taxon>Bacteria</taxon>
        <taxon>Pseudomonadati</taxon>
        <taxon>Thermodesulfobacteriota</taxon>
        <taxon>Desulfobulbia</taxon>
        <taxon>Desulfobulbales</taxon>
        <taxon>Desulfocapsaceae</taxon>
        <taxon>Desulfotalea</taxon>
    </lineage>
</organism>
<sequence>MRAKQHISDLAHHCIAHGMRHLVISPGSRNAPLIRAFAASSQIECLSIVDERSAAFVALGLATELQAPVGVLCTSGTALLNYGPAIAEAYYLRAPLIVLSADRPARLVGQQDSQTICQDNLFANIVKGSYSLPEEPETVAELELSARVIAQAFSTALSPCFGPVHINIPLDEPLYGGELMAESLIALSPLQLAEPKGMSPALWQEVESAWRGAKRRMIVCGQGVADAELQALLARFAPDKTVTIIAENTANIVGPWLVDRPDAVLLACDEASRSLLAPDCLISFGGHLVAKHIKLLLREFKPAFHFRLDPAQMGIDTYQCLSAELDLAPTTFFRRLAQQVEPAAGFRDLWALPEGVAENQDDEFLVLKRLLGQLPAGSIAHLGNSMSVRHAQKLASRADLLYHSNRGVAGIDGCLSTAVGVALATDQLVLCCLGDLSFVYDSNALWNRNLPSNLRIVILNNQGGDIFRRLKGPSVSPGYQDFFVAHHPVQIGKMIEAYGVAYRRCLASEIDGFSEEFLGLQDGPLVLEVFVDPTKRD</sequence>
<feature type="chain" id="PRO_0000341733" description="2-succinyl-5-enolpyruvyl-6-hydroxy-3-cyclohexene-1-carboxylate synthase">
    <location>
        <begin position="1"/>
        <end position="537"/>
    </location>
</feature>
<protein>
    <recommendedName>
        <fullName evidence="1">2-succinyl-5-enolpyruvyl-6-hydroxy-3-cyclohexene-1-carboxylate synthase</fullName>
        <shortName evidence="1">SEPHCHC synthase</shortName>
        <ecNumber evidence="1">2.2.1.9</ecNumber>
    </recommendedName>
    <alternativeName>
        <fullName evidence="1">Menaquinone biosynthesis protein MenD</fullName>
    </alternativeName>
</protein>
<comment type="function">
    <text evidence="1">Catalyzes the thiamine diphosphate-dependent decarboxylation of 2-oxoglutarate and the subsequent addition of the resulting succinic semialdehyde-thiamine pyrophosphate anion to isochorismate to yield 2-succinyl-5-enolpyruvyl-6-hydroxy-3-cyclohexene-1-carboxylate (SEPHCHC).</text>
</comment>
<comment type="catalytic activity">
    <reaction evidence="1">
        <text>isochorismate + 2-oxoglutarate + H(+) = 5-enolpyruvoyl-6-hydroxy-2-succinyl-cyclohex-3-ene-1-carboxylate + CO2</text>
        <dbReference type="Rhea" id="RHEA:25593"/>
        <dbReference type="ChEBI" id="CHEBI:15378"/>
        <dbReference type="ChEBI" id="CHEBI:16526"/>
        <dbReference type="ChEBI" id="CHEBI:16810"/>
        <dbReference type="ChEBI" id="CHEBI:29780"/>
        <dbReference type="ChEBI" id="CHEBI:58818"/>
        <dbReference type="EC" id="2.2.1.9"/>
    </reaction>
</comment>
<comment type="cofactor">
    <cofactor evidence="1">
        <name>Mg(2+)</name>
        <dbReference type="ChEBI" id="CHEBI:18420"/>
    </cofactor>
    <cofactor evidence="1">
        <name>Mn(2+)</name>
        <dbReference type="ChEBI" id="CHEBI:29035"/>
    </cofactor>
</comment>
<comment type="cofactor">
    <cofactor evidence="1">
        <name>thiamine diphosphate</name>
        <dbReference type="ChEBI" id="CHEBI:58937"/>
    </cofactor>
    <text evidence="1">Binds 1 thiamine pyrophosphate per subunit.</text>
</comment>
<comment type="pathway">
    <text evidence="1">Quinol/quinone metabolism; 1,4-dihydroxy-2-naphthoate biosynthesis; 1,4-dihydroxy-2-naphthoate from chorismate: step 2/7.</text>
</comment>
<comment type="pathway">
    <text evidence="1">Quinol/quinone metabolism; menaquinone biosynthesis.</text>
</comment>
<comment type="subunit">
    <text evidence="1">Homodimer.</text>
</comment>
<comment type="similarity">
    <text evidence="1">Belongs to the TPP enzyme family. MenD subfamily.</text>
</comment>
<dbReference type="EC" id="2.2.1.9" evidence="1"/>
<dbReference type="EMBL" id="CR522870">
    <property type="protein sequence ID" value="CAG34982.1"/>
    <property type="molecule type" value="Genomic_DNA"/>
</dbReference>
<dbReference type="RefSeq" id="WP_011187498.1">
    <property type="nucleotide sequence ID" value="NC_006138.1"/>
</dbReference>
<dbReference type="SMR" id="Q6ARP3"/>
<dbReference type="STRING" id="177439.DP0253"/>
<dbReference type="KEGG" id="dps:DP0253"/>
<dbReference type="eggNOG" id="COG1165">
    <property type="taxonomic scope" value="Bacteria"/>
</dbReference>
<dbReference type="HOGENOM" id="CLU_006051_3_0_7"/>
<dbReference type="OrthoDB" id="9791859at2"/>
<dbReference type="UniPathway" id="UPA00079"/>
<dbReference type="UniPathway" id="UPA01057">
    <property type="reaction ID" value="UER00164"/>
</dbReference>
<dbReference type="Proteomes" id="UP000000602">
    <property type="component" value="Chromosome"/>
</dbReference>
<dbReference type="GO" id="GO:0070204">
    <property type="term" value="F:2-succinyl-5-enolpyruvyl-6-hydroxy-3-cyclohexene-1-carboxylic-acid synthase activity"/>
    <property type="evidence" value="ECO:0007669"/>
    <property type="project" value="UniProtKB-UniRule"/>
</dbReference>
<dbReference type="GO" id="GO:0000287">
    <property type="term" value="F:magnesium ion binding"/>
    <property type="evidence" value="ECO:0007669"/>
    <property type="project" value="UniProtKB-UniRule"/>
</dbReference>
<dbReference type="GO" id="GO:0030145">
    <property type="term" value="F:manganese ion binding"/>
    <property type="evidence" value="ECO:0007669"/>
    <property type="project" value="UniProtKB-UniRule"/>
</dbReference>
<dbReference type="GO" id="GO:0030976">
    <property type="term" value="F:thiamine pyrophosphate binding"/>
    <property type="evidence" value="ECO:0007669"/>
    <property type="project" value="UniProtKB-UniRule"/>
</dbReference>
<dbReference type="GO" id="GO:0009234">
    <property type="term" value="P:menaquinone biosynthetic process"/>
    <property type="evidence" value="ECO:0007669"/>
    <property type="project" value="UniProtKB-UniRule"/>
</dbReference>
<dbReference type="CDD" id="cd07037">
    <property type="entry name" value="TPP_PYR_MenD"/>
    <property type="match status" value="1"/>
</dbReference>
<dbReference type="CDD" id="cd02009">
    <property type="entry name" value="TPP_SHCHC_synthase"/>
    <property type="match status" value="1"/>
</dbReference>
<dbReference type="Gene3D" id="3.40.50.970">
    <property type="match status" value="2"/>
</dbReference>
<dbReference type="Gene3D" id="3.40.50.1220">
    <property type="entry name" value="TPP-binding domain"/>
    <property type="match status" value="1"/>
</dbReference>
<dbReference type="HAMAP" id="MF_01659">
    <property type="entry name" value="MenD"/>
    <property type="match status" value="1"/>
</dbReference>
<dbReference type="InterPro" id="IPR029035">
    <property type="entry name" value="DHS-like_NAD/FAD-binding_dom"/>
</dbReference>
<dbReference type="InterPro" id="IPR004433">
    <property type="entry name" value="MenaQ_synth_MenD"/>
</dbReference>
<dbReference type="InterPro" id="IPR029061">
    <property type="entry name" value="THDP-binding"/>
</dbReference>
<dbReference type="InterPro" id="IPR012001">
    <property type="entry name" value="Thiamin_PyroP_enz_TPP-bd_dom"/>
</dbReference>
<dbReference type="NCBIfam" id="TIGR00173">
    <property type="entry name" value="menD"/>
    <property type="match status" value="1"/>
</dbReference>
<dbReference type="PANTHER" id="PTHR42916">
    <property type="entry name" value="2-SUCCINYL-5-ENOLPYRUVYL-6-HYDROXY-3-CYCLOHEXENE-1-CARBOXYLATE SYNTHASE"/>
    <property type="match status" value="1"/>
</dbReference>
<dbReference type="PANTHER" id="PTHR42916:SF1">
    <property type="entry name" value="PROTEIN PHYLLO, CHLOROPLASTIC"/>
    <property type="match status" value="1"/>
</dbReference>
<dbReference type="Pfam" id="PF02776">
    <property type="entry name" value="TPP_enzyme_N"/>
    <property type="match status" value="1"/>
</dbReference>
<dbReference type="PIRSF" id="PIRSF004983">
    <property type="entry name" value="MenD"/>
    <property type="match status" value="1"/>
</dbReference>
<dbReference type="SUPFAM" id="SSF52467">
    <property type="entry name" value="DHS-like NAD/FAD-binding domain"/>
    <property type="match status" value="1"/>
</dbReference>
<dbReference type="SUPFAM" id="SSF52518">
    <property type="entry name" value="Thiamin diphosphate-binding fold (THDP-binding)"/>
    <property type="match status" value="2"/>
</dbReference>
<name>MEND_DESPS</name>
<gene>
    <name evidence="1" type="primary">menD</name>
    <name type="ordered locus">DP0253</name>
</gene>
<keyword id="KW-0460">Magnesium</keyword>
<keyword id="KW-0464">Manganese</keyword>
<keyword id="KW-0474">Menaquinone biosynthesis</keyword>
<keyword id="KW-0479">Metal-binding</keyword>
<keyword id="KW-1185">Reference proteome</keyword>
<keyword id="KW-0786">Thiamine pyrophosphate</keyword>
<keyword id="KW-0808">Transferase</keyword>
<evidence type="ECO:0000255" key="1">
    <source>
        <dbReference type="HAMAP-Rule" id="MF_01659"/>
    </source>
</evidence>